<accession>C4PWA1</accession>
<comment type="function">
    <text evidence="1">Involved in the biosynthesis of prenylated phenazines. Catalyzes the transfer of a dimethylallyl moiety to C-9 of 5,10-dihydrophenazine 1-carboxylate (dihydro-PCA). Specific for both dimethylallyl diphosphate and dihydro-PCA.</text>
</comment>
<comment type="catalytic activity">
    <reaction evidence="1">
        <text>5,10-dihydrophenazine 1-carboxylate + dimethylallyl diphosphate = 5,10-dihydro-9-dimethylallylphenazine 1-carboxylate + diphosphate</text>
        <dbReference type="Rhea" id="RHEA:41580"/>
        <dbReference type="ChEBI" id="CHEBI:33019"/>
        <dbReference type="ChEBI" id="CHEBI:57623"/>
        <dbReference type="ChEBI" id="CHEBI:78312"/>
        <dbReference type="ChEBI" id="CHEBI:78313"/>
        <dbReference type="EC" id="2.5.1.121"/>
    </reaction>
</comment>
<comment type="activity regulation">
    <text evidence="1">Does not require magnesium or any other divalent metal ions for activity.</text>
</comment>
<comment type="biophysicochemical properties">
    <kinetics>
        <KM evidence="1">116 uM for dimethylallyl diphosphate</KM>
        <text evidence="1">kcat is 0.435 sec(-1).</text>
    </kinetics>
</comment>
<comment type="pathway">
    <text evidence="1">Antibiotic biosynthesis; phenazine biosynthesis.</text>
</comment>
<comment type="disruption phenotype">
    <text evidence="1">Mutant can form only nonprenylated phenazine 1-carboxylic acid.</text>
</comment>
<comment type="similarity">
    <text evidence="3">Belongs to the aromatic prenyltransferase family.</text>
</comment>
<dbReference type="EC" id="2.5.1.121" evidence="1"/>
<dbReference type="EMBL" id="FN178498">
    <property type="protein sequence ID" value="CAX48655.1"/>
    <property type="molecule type" value="Genomic_DNA"/>
</dbReference>
<dbReference type="RefSeq" id="WP_329155376.1">
    <property type="nucleotide sequence ID" value="NZ_CP108146.1"/>
</dbReference>
<dbReference type="SMR" id="C4PWA1"/>
<dbReference type="KEGG" id="ag:CAX48655"/>
<dbReference type="BRENDA" id="2.5.1.121">
    <property type="organism ID" value="5994"/>
</dbReference>
<dbReference type="UniPathway" id="UPA00099"/>
<dbReference type="GO" id="GO:0004659">
    <property type="term" value="F:prenyltransferase activity"/>
    <property type="evidence" value="ECO:0007669"/>
    <property type="project" value="UniProtKB-KW"/>
</dbReference>
<dbReference type="GO" id="GO:0002047">
    <property type="term" value="P:phenazine biosynthetic process"/>
    <property type="evidence" value="ECO:0007669"/>
    <property type="project" value="UniProtKB-UniPathway"/>
</dbReference>
<dbReference type="CDD" id="cd13931">
    <property type="entry name" value="PT-CloQ_NphB"/>
    <property type="match status" value="1"/>
</dbReference>
<dbReference type="InterPro" id="IPR033964">
    <property type="entry name" value="Aro_prenylTrfase"/>
</dbReference>
<dbReference type="InterPro" id="IPR020965">
    <property type="entry name" value="Prenyltransferase_CloQ"/>
</dbReference>
<dbReference type="InterPro" id="IPR036239">
    <property type="entry name" value="PrenylTrfase-like_sf"/>
</dbReference>
<dbReference type="Pfam" id="PF11468">
    <property type="entry name" value="PTase_Orf2"/>
    <property type="match status" value="1"/>
</dbReference>
<dbReference type="SFLD" id="SFLDS00036">
    <property type="entry name" value="Aromatic_Prenyltransferase"/>
    <property type="match status" value="1"/>
</dbReference>
<dbReference type="SFLD" id="SFLDG01163">
    <property type="entry name" value="II"/>
    <property type="match status" value="1"/>
</dbReference>
<dbReference type="SUPFAM" id="SSF143492">
    <property type="entry name" value="Prenyltransferase-like"/>
    <property type="match status" value="1"/>
</dbReference>
<sequence length="299" mass="33012">MSESAELTELYSAIEETTRVVGAPCRRDTVRPILTAYEDVIAQSVISFRVQTGTSDAGDLDCRFTLLPKDMDPYATALSNGLTAKTDHPVGSLLEEVHRQFPVDCYGIDFGAVGGFKKAWSFFRPDSLQSASDLAALPSMPSGVSENLGLFDRYGMTDTVSVVGFDYAKRSVNLYFTGASPESFEPRGIQAILRECGLPEPSDELLRFGEEAFAIYVTLSWDSQKIERVTYSVNTPDPMALPVRIDTRIEQLVKDAPLGSAGHRYVYGVTATPKGEYHKIQKYFQWQSRVEKMLTADAG</sequence>
<keyword id="KW-0045">Antibiotic biosynthesis</keyword>
<keyword id="KW-0637">Prenyltransferase</keyword>
<keyword id="KW-0808">Transferase</keyword>
<protein>
    <recommendedName>
        <fullName evidence="3">5,10-dihydrophenazine-1-carboxylate 9-dimethylallyltransferase</fullName>
        <shortName evidence="2">Dihydro-PCA dimethylallyltransferase</shortName>
        <ecNumber evidence="1">2.5.1.121</ecNumber>
    </recommendedName>
    <alternativeName>
        <fullName evidence="2">Dihydro-PCA prenyltransferase</fullName>
    </alternativeName>
</protein>
<gene>
    <name evidence="2" type="primary">ppzP</name>
</gene>
<reference key="1">
    <citation type="journal article" date="2009" name="J. Biol. Chem.">
        <title>Aromatic prenylation in phenazine biosynthesis: dihydrophenazine-1-carboxylate dimethylallyltransferase from Streptomyces anulatus.</title>
        <authorList>
            <person name="Saleh O."/>
            <person name="Gust B."/>
            <person name="Boll B."/>
            <person name="Fiedler H.P."/>
            <person name="Heide L."/>
        </authorList>
    </citation>
    <scope>NUCLEOTIDE SEQUENCE [GENOMIC DNA]</scope>
    <scope>FUNCTION</scope>
    <scope>CATALYTIC ACTIVITY</scope>
    <scope>ACTIVITY REGULATION</scope>
    <scope>BIOPHYSICOCHEMICAL PROPERTIES</scope>
    <scope>PATHWAY</scope>
    <scope>DISRUPTION PHENOTYPE</scope>
    <source>
        <strain>9663</strain>
    </source>
</reference>
<evidence type="ECO:0000269" key="1">
    <source>
    </source>
</evidence>
<evidence type="ECO:0000303" key="2">
    <source>
    </source>
</evidence>
<evidence type="ECO:0000305" key="3"/>
<proteinExistence type="evidence at protein level"/>
<name>PPZP_STRAQ</name>
<feature type="chain" id="PRO_0000430678" description="5,10-dihydrophenazine-1-carboxylate 9-dimethylallyltransferase">
    <location>
        <begin position="1"/>
        <end position="299"/>
    </location>
</feature>
<organism>
    <name type="scientific">Streptomyces anulatus</name>
    <name type="common">Streptomyces chrysomallus</name>
    <dbReference type="NCBI Taxonomy" id="1892"/>
    <lineage>
        <taxon>Bacteria</taxon>
        <taxon>Bacillati</taxon>
        <taxon>Actinomycetota</taxon>
        <taxon>Actinomycetes</taxon>
        <taxon>Kitasatosporales</taxon>
        <taxon>Streptomycetaceae</taxon>
        <taxon>Streptomyces</taxon>
    </lineage>
</organism>